<name>RS3_MYCTA</name>
<reference key="1">
    <citation type="journal article" date="2008" name="PLoS ONE">
        <title>Genetic basis of virulence attenuation revealed by comparative genomic analysis of Mycobacterium tuberculosis strain H37Ra versus H37Rv.</title>
        <authorList>
            <person name="Zheng H."/>
            <person name="Lu L."/>
            <person name="Wang B."/>
            <person name="Pu S."/>
            <person name="Zhang X."/>
            <person name="Zhu G."/>
            <person name="Shi W."/>
            <person name="Zhang L."/>
            <person name="Wang H."/>
            <person name="Wang S."/>
            <person name="Zhao G."/>
            <person name="Zhang Y."/>
        </authorList>
    </citation>
    <scope>NUCLEOTIDE SEQUENCE [LARGE SCALE GENOMIC DNA]</scope>
    <source>
        <strain>ATCC 25177 / H37Ra</strain>
    </source>
</reference>
<organism>
    <name type="scientific">Mycobacterium tuberculosis (strain ATCC 25177 / H37Ra)</name>
    <dbReference type="NCBI Taxonomy" id="419947"/>
    <lineage>
        <taxon>Bacteria</taxon>
        <taxon>Bacillati</taxon>
        <taxon>Actinomycetota</taxon>
        <taxon>Actinomycetes</taxon>
        <taxon>Mycobacteriales</taxon>
        <taxon>Mycobacteriaceae</taxon>
        <taxon>Mycobacterium</taxon>
        <taxon>Mycobacterium tuberculosis complex</taxon>
    </lineage>
</organism>
<keyword id="KW-1185">Reference proteome</keyword>
<keyword id="KW-0687">Ribonucleoprotein</keyword>
<keyword id="KW-0689">Ribosomal protein</keyword>
<keyword id="KW-0694">RNA-binding</keyword>
<keyword id="KW-0699">rRNA-binding</keyword>
<proteinExistence type="inferred from homology"/>
<comment type="function">
    <text evidence="1">Binds the lower part of the 30S subunit head. Binds mRNA in the 70S ribosome, positioning it for translation.</text>
</comment>
<comment type="subunit">
    <text evidence="1">Part of the 30S ribosomal subunit. Forms a tight complex with proteins S10 and S14.</text>
</comment>
<comment type="similarity">
    <text evidence="1">Belongs to the universal ribosomal protein uS3 family.</text>
</comment>
<dbReference type="EMBL" id="CP000611">
    <property type="protein sequence ID" value="ABQ72443.1"/>
    <property type="molecule type" value="Genomic_DNA"/>
</dbReference>
<dbReference type="RefSeq" id="WP_003403590.1">
    <property type="nucleotide sequence ID" value="NZ_CP016972.1"/>
</dbReference>
<dbReference type="SMR" id="A5U093"/>
<dbReference type="GeneID" id="45424672"/>
<dbReference type="KEGG" id="mra:MRA_0715"/>
<dbReference type="eggNOG" id="COG0092">
    <property type="taxonomic scope" value="Bacteria"/>
</dbReference>
<dbReference type="HOGENOM" id="CLU_058591_0_0_11"/>
<dbReference type="Proteomes" id="UP000001988">
    <property type="component" value="Chromosome"/>
</dbReference>
<dbReference type="GO" id="GO:0022627">
    <property type="term" value="C:cytosolic small ribosomal subunit"/>
    <property type="evidence" value="ECO:0007669"/>
    <property type="project" value="TreeGrafter"/>
</dbReference>
<dbReference type="GO" id="GO:0003729">
    <property type="term" value="F:mRNA binding"/>
    <property type="evidence" value="ECO:0007669"/>
    <property type="project" value="UniProtKB-UniRule"/>
</dbReference>
<dbReference type="GO" id="GO:0019843">
    <property type="term" value="F:rRNA binding"/>
    <property type="evidence" value="ECO:0007669"/>
    <property type="project" value="UniProtKB-UniRule"/>
</dbReference>
<dbReference type="GO" id="GO:0003735">
    <property type="term" value="F:structural constituent of ribosome"/>
    <property type="evidence" value="ECO:0007669"/>
    <property type="project" value="InterPro"/>
</dbReference>
<dbReference type="GO" id="GO:0006412">
    <property type="term" value="P:translation"/>
    <property type="evidence" value="ECO:0007669"/>
    <property type="project" value="UniProtKB-UniRule"/>
</dbReference>
<dbReference type="CDD" id="cd02412">
    <property type="entry name" value="KH-II_30S_S3"/>
    <property type="match status" value="1"/>
</dbReference>
<dbReference type="FunFam" id="3.30.1140.32:FF:000002">
    <property type="entry name" value="30S ribosomal protein S3"/>
    <property type="match status" value="1"/>
</dbReference>
<dbReference type="FunFam" id="3.30.300.20:FF:000001">
    <property type="entry name" value="30S ribosomal protein S3"/>
    <property type="match status" value="1"/>
</dbReference>
<dbReference type="Gene3D" id="3.30.300.20">
    <property type="match status" value="1"/>
</dbReference>
<dbReference type="Gene3D" id="3.30.1140.32">
    <property type="entry name" value="Ribosomal protein S3, C-terminal domain"/>
    <property type="match status" value="1"/>
</dbReference>
<dbReference type="HAMAP" id="MF_01309_B">
    <property type="entry name" value="Ribosomal_uS3_B"/>
    <property type="match status" value="1"/>
</dbReference>
<dbReference type="InterPro" id="IPR004087">
    <property type="entry name" value="KH_dom"/>
</dbReference>
<dbReference type="InterPro" id="IPR015946">
    <property type="entry name" value="KH_dom-like_a/b"/>
</dbReference>
<dbReference type="InterPro" id="IPR004044">
    <property type="entry name" value="KH_dom_type_2"/>
</dbReference>
<dbReference type="InterPro" id="IPR009019">
    <property type="entry name" value="KH_sf_prok-type"/>
</dbReference>
<dbReference type="InterPro" id="IPR036419">
    <property type="entry name" value="Ribosomal_S3_C_sf"/>
</dbReference>
<dbReference type="InterPro" id="IPR005704">
    <property type="entry name" value="Ribosomal_uS3_bac-typ"/>
</dbReference>
<dbReference type="InterPro" id="IPR001351">
    <property type="entry name" value="Ribosomal_uS3_C"/>
</dbReference>
<dbReference type="InterPro" id="IPR018280">
    <property type="entry name" value="Ribosomal_uS3_CS"/>
</dbReference>
<dbReference type="NCBIfam" id="TIGR01009">
    <property type="entry name" value="rpsC_bact"/>
    <property type="match status" value="1"/>
</dbReference>
<dbReference type="PANTHER" id="PTHR11760">
    <property type="entry name" value="30S/40S RIBOSOMAL PROTEIN S3"/>
    <property type="match status" value="1"/>
</dbReference>
<dbReference type="PANTHER" id="PTHR11760:SF19">
    <property type="entry name" value="SMALL RIBOSOMAL SUBUNIT PROTEIN US3C"/>
    <property type="match status" value="1"/>
</dbReference>
<dbReference type="Pfam" id="PF07650">
    <property type="entry name" value="KH_2"/>
    <property type="match status" value="1"/>
</dbReference>
<dbReference type="Pfam" id="PF00189">
    <property type="entry name" value="Ribosomal_S3_C"/>
    <property type="match status" value="1"/>
</dbReference>
<dbReference type="SMART" id="SM00322">
    <property type="entry name" value="KH"/>
    <property type="match status" value="1"/>
</dbReference>
<dbReference type="SUPFAM" id="SSF54814">
    <property type="entry name" value="Prokaryotic type KH domain (KH-domain type II)"/>
    <property type="match status" value="1"/>
</dbReference>
<dbReference type="SUPFAM" id="SSF54821">
    <property type="entry name" value="Ribosomal protein S3 C-terminal domain"/>
    <property type="match status" value="1"/>
</dbReference>
<dbReference type="PROSITE" id="PS50823">
    <property type="entry name" value="KH_TYPE_2"/>
    <property type="match status" value="1"/>
</dbReference>
<dbReference type="PROSITE" id="PS00548">
    <property type="entry name" value="RIBOSOMAL_S3"/>
    <property type="match status" value="1"/>
</dbReference>
<evidence type="ECO:0000255" key="1">
    <source>
        <dbReference type="HAMAP-Rule" id="MF_01309"/>
    </source>
</evidence>
<evidence type="ECO:0000256" key="2">
    <source>
        <dbReference type="SAM" id="MobiDB-lite"/>
    </source>
</evidence>
<evidence type="ECO:0000305" key="3"/>
<sequence>MGQKINPHGFRLGITTDWKSRWYADKQYAEYVKEDVAIRRLLSSGLERAGIADVEIERTRDRVRVDIHTARPGIVIGRRGTEADRIRADLEKLTGKQVQLNILEVKNPESQAQLVAQGVAEQLSNRVAFRRAMRKAIQSAMRQPNVKGIRVQCSGRLGGAEMSRSEFYREGRVPLHTLRADIDYGLYEAKTTFGRIGVKVWIYKGDIVGGKRELAAAAPAGADRPRRERPSGTRPRRSGASGTTATGTDAGRAAGGEEAAPDAAAPVEAQSTES</sequence>
<feature type="chain" id="PRO_1000086136" description="Small ribosomal subunit protein uS3">
    <location>
        <begin position="1"/>
        <end position="274"/>
    </location>
</feature>
<feature type="domain" description="KH type-2" evidence="1">
    <location>
        <begin position="38"/>
        <end position="106"/>
    </location>
</feature>
<feature type="region of interest" description="Disordered" evidence="2">
    <location>
        <begin position="215"/>
        <end position="274"/>
    </location>
</feature>
<feature type="compositionally biased region" description="Low complexity" evidence="2">
    <location>
        <begin position="238"/>
        <end position="266"/>
    </location>
</feature>
<accession>A5U093</accession>
<protein>
    <recommendedName>
        <fullName evidence="1">Small ribosomal subunit protein uS3</fullName>
    </recommendedName>
    <alternativeName>
        <fullName evidence="3">30S ribosomal protein S3</fullName>
    </alternativeName>
</protein>
<gene>
    <name evidence="1" type="primary">rpsC</name>
    <name type="ordered locus">MRA_0715</name>
</gene>